<keyword id="KW-1185">Reference proteome</keyword>
<keyword id="KW-0687">Ribonucleoprotein</keyword>
<keyword id="KW-0689">Ribosomal protein</keyword>
<sequence length="253" mass="28165">MSEVSMRDLLKAGVHFGHQTRFWNPKMRKYIFGARNKIHIINLEHTVPALNDALRFVSNLAEKKNKILFVGTKRAAGKIIKEEADRANMPYVNHRWLGGMLTNYKTIRQSIRRYRDLETQSQDGTFDKLTKKEVLMLNREMDKLERSIGGIKDMGGLPDALFVIDVDHERIAIKEANKLGIPVIGVVDTNSDPDGVDYVIPGNDDAIRAIQVYAKAVADSCLHGLSSAAGNGDEFVEVNEAAASAEEAAEKSE</sequence>
<comment type="similarity">
    <text evidence="1">Belongs to the universal ribosomal protein uS2 family.</text>
</comment>
<organism>
    <name type="scientific">Hahella chejuensis (strain KCTC 2396)</name>
    <dbReference type="NCBI Taxonomy" id="349521"/>
    <lineage>
        <taxon>Bacteria</taxon>
        <taxon>Pseudomonadati</taxon>
        <taxon>Pseudomonadota</taxon>
        <taxon>Gammaproteobacteria</taxon>
        <taxon>Oceanospirillales</taxon>
        <taxon>Hahellaceae</taxon>
        <taxon>Hahella</taxon>
    </lineage>
</organism>
<evidence type="ECO:0000255" key="1">
    <source>
        <dbReference type="HAMAP-Rule" id="MF_00291"/>
    </source>
</evidence>
<evidence type="ECO:0000305" key="2"/>
<gene>
    <name evidence="1" type="primary">rpsB</name>
    <name type="ordered locus">HCH_05253</name>
</gene>
<feature type="chain" id="PRO_1000003974" description="Small ribosomal subunit protein uS2">
    <location>
        <begin position="1"/>
        <end position="253"/>
    </location>
</feature>
<protein>
    <recommendedName>
        <fullName evidence="1">Small ribosomal subunit protein uS2</fullName>
    </recommendedName>
    <alternativeName>
        <fullName evidence="2">30S ribosomal protein S2</fullName>
    </alternativeName>
</protein>
<name>RS2_HAHCH</name>
<dbReference type="EMBL" id="CP000155">
    <property type="protein sequence ID" value="ABC31927.1"/>
    <property type="molecule type" value="Genomic_DNA"/>
</dbReference>
<dbReference type="RefSeq" id="WP_011398991.1">
    <property type="nucleotide sequence ID" value="NC_007645.1"/>
</dbReference>
<dbReference type="SMR" id="Q2SBP7"/>
<dbReference type="STRING" id="349521.HCH_05253"/>
<dbReference type="KEGG" id="hch:HCH_05253"/>
<dbReference type="eggNOG" id="COG0052">
    <property type="taxonomic scope" value="Bacteria"/>
</dbReference>
<dbReference type="HOGENOM" id="CLU_040318_1_0_6"/>
<dbReference type="OrthoDB" id="9808036at2"/>
<dbReference type="Proteomes" id="UP000000238">
    <property type="component" value="Chromosome"/>
</dbReference>
<dbReference type="GO" id="GO:0022627">
    <property type="term" value="C:cytosolic small ribosomal subunit"/>
    <property type="evidence" value="ECO:0007669"/>
    <property type="project" value="TreeGrafter"/>
</dbReference>
<dbReference type="GO" id="GO:0003735">
    <property type="term" value="F:structural constituent of ribosome"/>
    <property type="evidence" value="ECO:0007669"/>
    <property type="project" value="InterPro"/>
</dbReference>
<dbReference type="GO" id="GO:0006412">
    <property type="term" value="P:translation"/>
    <property type="evidence" value="ECO:0007669"/>
    <property type="project" value="UniProtKB-UniRule"/>
</dbReference>
<dbReference type="CDD" id="cd01425">
    <property type="entry name" value="RPS2"/>
    <property type="match status" value="1"/>
</dbReference>
<dbReference type="FunFam" id="1.10.287.610:FF:000001">
    <property type="entry name" value="30S ribosomal protein S2"/>
    <property type="match status" value="1"/>
</dbReference>
<dbReference type="Gene3D" id="3.40.50.10490">
    <property type="entry name" value="Glucose-6-phosphate isomerase like protein, domain 1"/>
    <property type="match status" value="1"/>
</dbReference>
<dbReference type="Gene3D" id="1.10.287.610">
    <property type="entry name" value="Helix hairpin bin"/>
    <property type="match status" value="1"/>
</dbReference>
<dbReference type="HAMAP" id="MF_00291_B">
    <property type="entry name" value="Ribosomal_uS2_B"/>
    <property type="match status" value="1"/>
</dbReference>
<dbReference type="InterPro" id="IPR001865">
    <property type="entry name" value="Ribosomal_uS2"/>
</dbReference>
<dbReference type="InterPro" id="IPR005706">
    <property type="entry name" value="Ribosomal_uS2_bac/mit/plastid"/>
</dbReference>
<dbReference type="InterPro" id="IPR018130">
    <property type="entry name" value="Ribosomal_uS2_CS"/>
</dbReference>
<dbReference type="InterPro" id="IPR023591">
    <property type="entry name" value="Ribosomal_uS2_flav_dom_sf"/>
</dbReference>
<dbReference type="NCBIfam" id="TIGR01011">
    <property type="entry name" value="rpsB_bact"/>
    <property type="match status" value="1"/>
</dbReference>
<dbReference type="PANTHER" id="PTHR12534">
    <property type="entry name" value="30S RIBOSOMAL PROTEIN S2 PROKARYOTIC AND ORGANELLAR"/>
    <property type="match status" value="1"/>
</dbReference>
<dbReference type="PANTHER" id="PTHR12534:SF0">
    <property type="entry name" value="SMALL RIBOSOMAL SUBUNIT PROTEIN US2M"/>
    <property type="match status" value="1"/>
</dbReference>
<dbReference type="Pfam" id="PF00318">
    <property type="entry name" value="Ribosomal_S2"/>
    <property type="match status" value="1"/>
</dbReference>
<dbReference type="PRINTS" id="PR00395">
    <property type="entry name" value="RIBOSOMALS2"/>
</dbReference>
<dbReference type="SUPFAM" id="SSF52313">
    <property type="entry name" value="Ribosomal protein S2"/>
    <property type="match status" value="1"/>
</dbReference>
<dbReference type="PROSITE" id="PS00962">
    <property type="entry name" value="RIBOSOMAL_S2_1"/>
    <property type="match status" value="1"/>
</dbReference>
<dbReference type="PROSITE" id="PS00963">
    <property type="entry name" value="RIBOSOMAL_S2_2"/>
    <property type="match status" value="1"/>
</dbReference>
<accession>Q2SBP7</accession>
<reference key="1">
    <citation type="journal article" date="2005" name="Nucleic Acids Res.">
        <title>Genomic blueprint of Hahella chejuensis, a marine microbe producing an algicidal agent.</title>
        <authorList>
            <person name="Jeong H."/>
            <person name="Yim J.H."/>
            <person name="Lee C."/>
            <person name="Choi S.-H."/>
            <person name="Park Y.K."/>
            <person name="Yoon S.H."/>
            <person name="Hur C.-G."/>
            <person name="Kang H.-Y."/>
            <person name="Kim D."/>
            <person name="Lee H.H."/>
            <person name="Park K.H."/>
            <person name="Park S.-H."/>
            <person name="Park H.-S."/>
            <person name="Lee H.K."/>
            <person name="Oh T.K."/>
            <person name="Kim J.F."/>
        </authorList>
    </citation>
    <scope>NUCLEOTIDE SEQUENCE [LARGE SCALE GENOMIC DNA]</scope>
    <source>
        <strain>KCTC 2396</strain>
    </source>
</reference>
<proteinExistence type="inferred from homology"/>